<proteinExistence type="inferred from homology"/>
<accession>A5VML0</accession>
<gene>
    <name evidence="1" type="primary">nnrE</name>
    <name type="ordered locus">Lreu_1846</name>
</gene>
<feature type="chain" id="PRO_0000416359" description="NAD(P)H-hydrate epimerase">
    <location>
        <begin position="1"/>
        <end position="212"/>
    </location>
</feature>
<feature type="domain" description="YjeF N-terminal" evidence="1">
    <location>
        <begin position="11"/>
        <end position="212"/>
    </location>
</feature>
<feature type="binding site" evidence="1">
    <location>
        <begin position="60"/>
        <end position="64"/>
    </location>
    <ligand>
        <name>(6S)-NADPHX</name>
        <dbReference type="ChEBI" id="CHEBI:64076"/>
    </ligand>
</feature>
<feature type="binding site" evidence="1">
    <location>
        <position position="61"/>
    </location>
    <ligand>
        <name>K(+)</name>
        <dbReference type="ChEBI" id="CHEBI:29103"/>
    </ligand>
</feature>
<feature type="binding site" evidence="1">
    <location>
        <position position="123"/>
    </location>
    <ligand>
        <name>K(+)</name>
        <dbReference type="ChEBI" id="CHEBI:29103"/>
    </ligand>
</feature>
<feature type="binding site" evidence="1">
    <location>
        <begin position="127"/>
        <end position="133"/>
    </location>
    <ligand>
        <name>(6S)-NADPHX</name>
        <dbReference type="ChEBI" id="CHEBI:64076"/>
    </ligand>
</feature>
<feature type="binding site" evidence="1">
    <location>
        <position position="138"/>
    </location>
    <ligand>
        <name>(6S)-NADPHX</name>
        <dbReference type="ChEBI" id="CHEBI:64076"/>
    </ligand>
</feature>
<feature type="binding site" evidence="1">
    <location>
        <position position="156"/>
    </location>
    <ligand>
        <name>(6S)-NADPHX</name>
        <dbReference type="ChEBI" id="CHEBI:64076"/>
    </ligand>
</feature>
<feature type="binding site" evidence="1">
    <location>
        <position position="159"/>
    </location>
    <ligand>
        <name>K(+)</name>
        <dbReference type="ChEBI" id="CHEBI:29103"/>
    </ligand>
</feature>
<reference key="1">
    <citation type="journal article" date="2011" name="PLoS Genet.">
        <title>The evolution of host specialization in the vertebrate gut symbiont Lactobacillus reuteri.</title>
        <authorList>
            <person name="Frese S.A."/>
            <person name="Benson A.K."/>
            <person name="Tannock G.W."/>
            <person name="Loach D.M."/>
            <person name="Kim J."/>
            <person name="Zhang M."/>
            <person name="Oh P.L."/>
            <person name="Heng N.C."/>
            <person name="Patil P.B."/>
            <person name="Juge N."/>
            <person name="Mackenzie D.A."/>
            <person name="Pearson B.M."/>
            <person name="Lapidus A."/>
            <person name="Dalin E."/>
            <person name="Tice H."/>
            <person name="Goltsman E."/>
            <person name="Land M."/>
            <person name="Hauser L."/>
            <person name="Ivanova N."/>
            <person name="Kyrpides N.C."/>
            <person name="Walter J."/>
        </authorList>
    </citation>
    <scope>NUCLEOTIDE SEQUENCE [LARGE SCALE GENOMIC DNA]</scope>
    <source>
        <strain>DSM 20016</strain>
    </source>
</reference>
<comment type="function">
    <text evidence="1">Catalyzes the epimerization of the S- and R-forms of NAD(P)HX, a damaged form of NAD(P)H that is a result of enzymatic or heat-dependent hydration. This is a prerequisite for the S-specific NAD(P)H-hydrate dehydratase to allow the repair of both epimers of NAD(P)HX.</text>
</comment>
<comment type="catalytic activity">
    <reaction evidence="1">
        <text>(6R)-NADHX = (6S)-NADHX</text>
        <dbReference type="Rhea" id="RHEA:32215"/>
        <dbReference type="ChEBI" id="CHEBI:64074"/>
        <dbReference type="ChEBI" id="CHEBI:64075"/>
        <dbReference type="EC" id="5.1.99.6"/>
    </reaction>
</comment>
<comment type="catalytic activity">
    <reaction evidence="1">
        <text>(6R)-NADPHX = (6S)-NADPHX</text>
        <dbReference type="Rhea" id="RHEA:32227"/>
        <dbReference type="ChEBI" id="CHEBI:64076"/>
        <dbReference type="ChEBI" id="CHEBI:64077"/>
        <dbReference type="EC" id="5.1.99.6"/>
    </reaction>
</comment>
<comment type="cofactor">
    <cofactor evidence="1">
        <name>K(+)</name>
        <dbReference type="ChEBI" id="CHEBI:29103"/>
    </cofactor>
    <text evidence="1">Binds 1 potassium ion per subunit.</text>
</comment>
<comment type="similarity">
    <text evidence="1">Belongs to the NnrE/AIBP family.</text>
</comment>
<organism>
    <name type="scientific">Limosilactobacillus reuteri (strain DSM 20016)</name>
    <name type="common">Lactobacillus reuteri</name>
    <dbReference type="NCBI Taxonomy" id="557436"/>
    <lineage>
        <taxon>Bacteria</taxon>
        <taxon>Bacillati</taxon>
        <taxon>Bacillota</taxon>
        <taxon>Bacilli</taxon>
        <taxon>Lactobacillales</taxon>
        <taxon>Lactobacillaceae</taxon>
        <taxon>Limosilactobacillus</taxon>
    </lineage>
</organism>
<evidence type="ECO:0000255" key="1">
    <source>
        <dbReference type="HAMAP-Rule" id="MF_01966"/>
    </source>
</evidence>
<name>NNRE_LIMRD</name>
<protein>
    <recommendedName>
        <fullName evidence="1">NAD(P)H-hydrate epimerase</fullName>
        <ecNumber evidence="1">5.1.99.6</ecNumber>
    </recommendedName>
    <alternativeName>
        <fullName evidence="1">NAD(P)HX epimerase</fullName>
    </alternativeName>
</protein>
<dbReference type="EC" id="5.1.99.6" evidence="1"/>
<dbReference type="EMBL" id="CP000705">
    <property type="protein sequence ID" value="ABQ84084.1"/>
    <property type="molecule type" value="Genomic_DNA"/>
</dbReference>
<dbReference type="RefSeq" id="WP_003669336.1">
    <property type="nucleotide sequence ID" value="NC_009513.1"/>
</dbReference>
<dbReference type="SMR" id="A5VML0"/>
<dbReference type="STRING" id="557436.Lreu_1846"/>
<dbReference type="KEGG" id="lre:Lreu_1846"/>
<dbReference type="PATRIC" id="fig|557436.17.peg.2004"/>
<dbReference type="eggNOG" id="COG0062">
    <property type="taxonomic scope" value="Bacteria"/>
</dbReference>
<dbReference type="HOGENOM" id="CLU_024853_0_1_9"/>
<dbReference type="OMA" id="MIKAANH"/>
<dbReference type="Proteomes" id="UP000001991">
    <property type="component" value="Chromosome"/>
</dbReference>
<dbReference type="GO" id="GO:0046872">
    <property type="term" value="F:metal ion binding"/>
    <property type="evidence" value="ECO:0007669"/>
    <property type="project" value="UniProtKB-KW"/>
</dbReference>
<dbReference type="GO" id="GO:0052856">
    <property type="term" value="F:NAD(P)HX epimerase activity"/>
    <property type="evidence" value="ECO:0007669"/>
    <property type="project" value="UniProtKB-UniRule"/>
</dbReference>
<dbReference type="GO" id="GO:0000166">
    <property type="term" value="F:nucleotide binding"/>
    <property type="evidence" value="ECO:0007669"/>
    <property type="project" value="UniProtKB-KW"/>
</dbReference>
<dbReference type="Gene3D" id="3.40.50.10260">
    <property type="entry name" value="YjeF N-terminal domain"/>
    <property type="match status" value="1"/>
</dbReference>
<dbReference type="HAMAP" id="MF_01966">
    <property type="entry name" value="NADHX_epimerase"/>
    <property type="match status" value="1"/>
</dbReference>
<dbReference type="InterPro" id="IPR004443">
    <property type="entry name" value="YjeF_N_dom"/>
</dbReference>
<dbReference type="InterPro" id="IPR036652">
    <property type="entry name" value="YjeF_N_dom_sf"/>
</dbReference>
<dbReference type="InterPro" id="IPR032976">
    <property type="entry name" value="YJEFN_prot_NAXE-like"/>
</dbReference>
<dbReference type="NCBIfam" id="TIGR00197">
    <property type="entry name" value="yjeF_nterm"/>
    <property type="match status" value="1"/>
</dbReference>
<dbReference type="PANTHER" id="PTHR13232">
    <property type="entry name" value="NAD(P)H-HYDRATE EPIMERASE"/>
    <property type="match status" value="1"/>
</dbReference>
<dbReference type="PANTHER" id="PTHR13232:SF10">
    <property type="entry name" value="NAD(P)H-HYDRATE EPIMERASE"/>
    <property type="match status" value="1"/>
</dbReference>
<dbReference type="Pfam" id="PF03853">
    <property type="entry name" value="YjeF_N"/>
    <property type="match status" value="1"/>
</dbReference>
<dbReference type="SUPFAM" id="SSF64153">
    <property type="entry name" value="YjeF N-terminal domain-like"/>
    <property type="match status" value="1"/>
</dbReference>
<dbReference type="PROSITE" id="PS51385">
    <property type="entry name" value="YJEF_N"/>
    <property type="match status" value="1"/>
</dbReference>
<keyword id="KW-0413">Isomerase</keyword>
<keyword id="KW-0479">Metal-binding</keyword>
<keyword id="KW-0520">NAD</keyword>
<keyword id="KW-0521">NADP</keyword>
<keyword id="KW-0547">Nucleotide-binding</keyword>
<keyword id="KW-0630">Potassium</keyword>
<keyword id="KW-1185">Reference proteome</keyword>
<sequence>MTDKIVTAEEMRHYDFYTINTIGIPSLVLMERAALAVRDEILHAFPIALKDVVVVAGSGNNGGDGIAIARLLHIAGVHVTILNIGNPQHASAEHQTQEKIAQYYQIPETSDLAVLNKATLIVDAMFGIGIDRAVKGAYADAINAINNTDAVVVAVDMPSGVNTDTGEVMGTAVRATTTVTFAYNKVGLTKNDGKDYAGNVVVANDMGTYAVD</sequence>